<accession>B7HPJ5</accession>
<sequence>MDNKIVYVVSDSVGETADLVVRAAMGQFPFAPDIRRVPYVEDTGTLKEVISIAKSNQALICFTLVKPDMRQYLVTEAAKEGVEAYDIIGPLIDQIEEITGQVPRYEPGVVRRLDEEYFKKIEAIEFAVKYDDGRDARGILKADIVLIGISRTSKTPLSQYLAHNKRLKVANVPLVPEVDPPEELYQVAKEKCFGLKITPEKLNHIRKERLKSLGLSDGATYANINRIKEEIDHFENVVSKINCQVIDVSNKAIEETANIIVNAVQNQKMF</sequence>
<protein>
    <recommendedName>
        <fullName evidence="1">Putative pyruvate, phosphate dikinase regulatory protein</fullName>
        <shortName evidence="1">PPDK regulatory protein</shortName>
        <ecNumber evidence="1">2.7.11.32</ecNumber>
        <ecNumber evidence="1">2.7.4.27</ecNumber>
    </recommendedName>
</protein>
<name>PDRP_BACC7</name>
<feature type="chain" id="PRO_1000136454" description="Putative pyruvate, phosphate dikinase regulatory protein">
    <location>
        <begin position="1"/>
        <end position="270"/>
    </location>
</feature>
<feature type="binding site" evidence="1">
    <location>
        <begin position="148"/>
        <end position="155"/>
    </location>
    <ligand>
        <name>ADP</name>
        <dbReference type="ChEBI" id="CHEBI:456216"/>
    </ligand>
</feature>
<reference key="1">
    <citation type="submission" date="2008-10" db="EMBL/GenBank/DDBJ databases">
        <title>Genome sequence of Bacillus cereus AH187.</title>
        <authorList>
            <person name="Dodson R.J."/>
            <person name="Durkin A.S."/>
            <person name="Rosovitz M.J."/>
            <person name="Rasko D.A."/>
            <person name="Kolsto A.B."/>
            <person name="Okstad O.A."/>
            <person name="Ravel J."/>
            <person name="Sutton G."/>
        </authorList>
    </citation>
    <scope>NUCLEOTIDE SEQUENCE [LARGE SCALE GENOMIC DNA]</scope>
    <source>
        <strain>AH187</strain>
    </source>
</reference>
<keyword id="KW-0418">Kinase</keyword>
<keyword id="KW-0547">Nucleotide-binding</keyword>
<keyword id="KW-0723">Serine/threonine-protein kinase</keyword>
<keyword id="KW-0808">Transferase</keyword>
<comment type="function">
    <text evidence="1">Bifunctional serine/threonine kinase and phosphorylase involved in the regulation of the pyruvate, phosphate dikinase (PPDK) by catalyzing its phosphorylation/dephosphorylation.</text>
</comment>
<comment type="catalytic activity">
    <reaction evidence="1">
        <text>N(tele)-phospho-L-histidyl/L-threonyl-[pyruvate, phosphate dikinase] + ADP = N(tele)-phospho-L-histidyl/O-phospho-L-threonyl-[pyruvate, phosphate dikinase] + AMP + H(+)</text>
        <dbReference type="Rhea" id="RHEA:43692"/>
        <dbReference type="Rhea" id="RHEA-COMP:10650"/>
        <dbReference type="Rhea" id="RHEA-COMP:10651"/>
        <dbReference type="ChEBI" id="CHEBI:15378"/>
        <dbReference type="ChEBI" id="CHEBI:30013"/>
        <dbReference type="ChEBI" id="CHEBI:61977"/>
        <dbReference type="ChEBI" id="CHEBI:83586"/>
        <dbReference type="ChEBI" id="CHEBI:456215"/>
        <dbReference type="ChEBI" id="CHEBI:456216"/>
        <dbReference type="EC" id="2.7.11.32"/>
    </reaction>
</comment>
<comment type="catalytic activity">
    <reaction evidence="1">
        <text>N(tele)-phospho-L-histidyl/O-phospho-L-threonyl-[pyruvate, phosphate dikinase] + phosphate + H(+) = N(tele)-phospho-L-histidyl/L-threonyl-[pyruvate, phosphate dikinase] + diphosphate</text>
        <dbReference type="Rhea" id="RHEA:43696"/>
        <dbReference type="Rhea" id="RHEA-COMP:10650"/>
        <dbReference type="Rhea" id="RHEA-COMP:10651"/>
        <dbReference type="ChEBI" id="CHEBI:15378"/>
        <dbReference type="ChEBI" id="CHEBI:30013"/>
        <dbReference type="ChEBI" id="CHEBI:33019"/>
        <dbReference type="ChEBI" id="CHEBI:43474"/>
        <dbReference type="ChEBI" id="CHEBI:61977"/>
        <dbReference type="ChEBI" id="CHEBI:83586"/>
        <dbReference type="EC" id="2.7.4.27"/>
    </reaction>
</comment>
<comment type="similarity">
    <text evidence="1">Belongs to the pyruvate, phosphate/water dikinase regulatory protein family. PDRP subfamily.</text>
</comment>
<dbReference type="EC" id="2.7.11.32" evidence="1"/>
<dbReference type="EC" id="2.7.4.27" evidence="1"/>
<dbReference type="EMBL" id="CP001177">
    <property type="protein sequence ID" value="ACJ80545.1"/>
    <property type="molecule type" value="Genomic_DNA"/>
</dbReference>
<dbReference type="SMR" id="B7HPJ5"/>
<dbReference type="KEGG" id="bcr:BCAH187_A4429"/>
<dbReference type="HOGENOM" id="CLU_046206_2_1_9"/>
<dbReference type="Proteomes" id="UP000002214">
    <property type="component" value="Chromosome"/>
</dbReference>
<dbReference type="GO" id="GO:0043531">
    <property type="term" value="F:ADP binding"/>
    <property type="evidence" value="ECO:0007669"/>
    <property type="project" value="UniProtKB-UniRule"/>
</dbReference>
<dbReference type="GO" id="GO:0005524">
    <property type="term" value="F:ATP binding"/>
    <property type="evidence" value="ECO:0007669"/>
    <property type="project" value="InterPro"/>
</dbReference>
<dbReference type="GO" id="GO:0016776">
    <property type="term" value="F:phosphotransferase activity, phosphate group as acceptor"/>
    <property type="evidence" value="ECO:0007669"/>
    <property type="project" value="UniProtKB-UniRule"/>
</dbReference>
<dbReference type="GO" id="GO:0004674">
    <property type="term" value="F:protein serine/threonine kinase activity"/>
    <property type="evidence" value="ECO:0007669"/>
    <property type="project" value="UniProtKB-UniRule"/>
</dbReference>
<dbReference type="HAMAP" id="MF_00921">
    <property type="entry name" value="PDRP"/>
    <property type="match status" value="1"/>
</dbReference>
<dbReference type="InterPro" id="IPR005177">
    <property type="entry name" value="Kinase-pyrophosphorylase"/>
</dbReference>
<dbReference type="InterPro" id="IPR026565">
    <property type="entry name" value="PPDK_reg"/>
</dbReference>
<dbReference type="NCBIfam" id="NF003742">
    <property type="entry name" value="PRK05339.1"/>
    <property type="match status" value="1"/>
</dbReference>
<dbReference type="PANTHER" id="PTHR31756">
    <property type="entry name" value="PYRUVATE, PHOSPHATE DIKINASE REGULATORY PROTEIN 1, CHLOROPLASTIC"/>
    <property type="match status" value="1"/>
</dbReference>
<dbReference type="PANTHER" id="PTHR31756:SF3">
    <property type="entry name" value="PYRUVATE, PHOSPHATE DIKINASE REGULATORY PROTEIN 1, CHLOROPLASTIC"/>
    <property type="match status" value="1"/>
</dbReference>
<dbReference type="Pfam" id="PF03618">
    <property type="entry name" value="Kinase-PPPase"/>
    <property type="match status" value="1"/>
</dbReference>
<evidence type="ECO:0000255" key="1">
    <source>
        <dbReference type="HAMAP-Rule" id="MF_00921"/>
    </source>
</evidence>
<gene>
    <name type="ordered locus">BCAH187_A4429</name>
</gene>
<proteinExistence type="inferred from homology"/>
<organism>
    <name type="scientific">Bacillus cereus (strain AH187)</name>
    <dbReference type="NCBI Taxonomy" id="405534"/>
    <lineage>
        <taxon>Bacteria</taxon>
        <taxon>Bacillati</taxon>
        <taxon>Bacillota</taxon>
        <taxon>Bacilli</taxon>
        <taxon>Bacillales</taxon>
        <taxon>Bacillaceae</taxon>
        <taxon>Bacillus</taxon>
        <taxon>Bacillus cereus group</taxon>
    </lineage>
</organism>